<gene>
    <name type="primary">ITGB1BP2</name>
    <name type="ORF">MSTP015</name>
</gene>
<proteinExistence type="evidence at protein level"/>
<accession>Q9UKP3</accession>
<accession>Q32N04</accession>
<accession>Q549J7</accession>
<evidence type="ECO:0000255" key="1"/>
<evidence type="ECO:0000255" key="2">
    <source>
        <dbReference type="PROSITE-ProRule" id="PRU00547"/>
    </source>
</evidence>
<evidence type="ECO:0000255" key="3">
    <source>
        <dbReference type="PROSITE-ProRule" id="PRU00734"/>
    </source>
</evidence>
<evidence type="ECO:0000256" key="4">
    <source>
        <dbReference type="SAM" id="MobiDB-lite"/>
    </source>
</evidence>
<evidence type="ECO:0000303" key="5">
    <source>
    </source>
</evidence>
<name>ITBP2_HUMAN</name>
<sequence>MSLLCRNKGCGQHFDPNTNLPDSCCHHPGVPIFHDALKGWSCCRKRTVDFSEFLNIKGCTMGPHCAEKLPEAPQPEGPATSSSLQEQKPLNVIPKSAETLRRERPKSELPLKLLPLNISQALEMALEQKELDQEPGAGLDSLIRTGSSCQNPGCDAVYQGPESDATPCTYHPGAPRFHEGMKSWSCCGIQTLDFGAFLAQPGCRVGRHDWGKQLPASCRHDWHQTDSLVVVTVYGQIPLPAFNWVKASQTELHVHIVFDGNRVFQAQMKLWGVINVEQSSVFLMPSRVEISLVKADPGSWAQLEHPDALAKKARAGVVLEMDEEESDDSDDDLSWTEEEEEEEAMGE</sequence>
<keyword id="KW-0025">Alternative splicing</keyword>
<keyword id="KW-0479">Metal-binding</keyword>
<keyword id="KW-1267">Proteomics identification</keyword>
<keyword id="KW-1185">Reference proteome</keyword>
<keyword id="KW-0677">Repeat</keyword>
<keyword id="KW-0729">SH3-binding</keyword>
<keyword id="KW-0862">Zinc</keyword>
<organism>
    <name type="scientific">Homo sapiens</name>
    <name type="common">Human</name>
    <dbReference type="NCBI Taxonomy" id="9606"/>
    <lineage>
        <taxon>Eukaryota</taxon>
        <taxon>Metazoa</taxon>
        <taxon>Chordata</taxon>
        <taxon>Craniata</taxon>
        <taxon>Vertebrata</taxon>
        <taxon>Euteleostomi</taxon>
        <taxon>Mammalia</taxon>
        <taxon>Eutheria</taxon>
        <taxon>Euarchontoglires</taxon>
        <taxon>Primates</taxon>
        <taxon>Haplorrhini</taxon>
        <taxon>Catarrhini</taxon>
        <taxon>Hominidae</taxon>
        <taxon>Homo</taxon>
    </lineage>
</organism>
<protein>
    <recommendedName>
        <fullName>Integrin beta-1-binding protein 2</fullName>
    </recommendedName>
    <alternativeName>
        <fullName>Melusin</fullName>
    </alternativeName>
</protein>
<dbReference type="EMBL" id="AF140690">
    <property type="protein sequence ID" value="AAF01676.1"/>
    <property type="molecule type" value="mRNA"/>
</dbReference>
<dbReference type="EMBL" id="AF110225">
    <property type="protein sequence ID" value="AAL36913.1"/>
    <property type="molecule type" value="mRNA"/>
</dbReference>
<dbReference type="EMBL" id="AL590762">
    <property type="status" value="NOT_ANNOTATED_CDS"/>
    <property type="molecule type" value="Genomic_DNA"/>
</dbReference>
<dbReference type="EMBL" id="BC108901">
    <property type="protein sequence ID" value="AAI08902.1"/>
    <property type="molecule type" value="mRNA"/>
</dbReference>
<dbReference type="CCDS" id="CCDS14411.1">
    <molecule id="Q9UKP3-1"/>
</dbReference>
<dbReference type="RefSeq" id="NP_036410.1">
    <molecule id="Q9UKP3-1"/>
    <property type="nucleotide sequence ID" value="NM_012278.4"/>
</dbReference>
<dbReference type="SMR" id="Q9UKP3"/>
<dbReference type="BioGRID" id="117742">
    <property type="interactions" value="28"/>
</dbReference>
<dbReference type="FunCoup" id="Q9UKP3">
    <property type="interactions" value="17"/>
</dbReference>
<dbReference type="IntAct" id="Q9UKP3">
    <property type="interactions" value="31"/>
</dbReference>
<dbReference type="MINT" id="Q9UKP3"/>
<dbReference type="STRING" id="9606.ENSP00000362935"/>
<dbReference type="iPTMnet" id="Q9UKP3"/>
<dbReference type="PhosphoSitePlus" id="Q9UKP3"/>
<dbReference type="BioMuta" id="ITGB1BP2"/>
<dbReference type="DMDM" id="20138790"/>
<dbReference type="MassIVE" id="Q9UKP3"/>
<dbReference type="PaxDb" id="9606-ENSP00000362935"/>
<dbReference type="PeptideAtlas" id="Q9UKP3"/>
<dbReference type="ProteomicsDB" id="61614"/>
<dbReference type="ProteomicsDB" id="84827">
    <molecule id="Q9UKP3-1"/>
</dbReference>
<dbReference type="Antibodypedia" id="13542">
    <property type="antibodies" value="211 antibodies from 28 providers"/>
</dbReference>
<dbReference type="DNASU" id="26548"/>
<dbReference type="Ensembl" id="ENST00000373829.8">
    <molecule id="Q9UKP3-1"/>
    <property type="protein sequence ID" value="ENSP00000362935.3"/>
    <property type="gene ID" value="ENSG00000147166.11"/>
</dbReference>
<dbReference type="Ensembl" id="ENST00000538820.1">
    <molecule id="Q9UKP3-2"/>
    <property type="protein sequence ID" value="ENSP00000440289.1"/>
    <property type="gene ID" value="ENSG00000147166.11"/>
</dbReference>
<dbReference type="GeneID" id="26548"/>
<dbReference type="KEGG" id="hsa:26548"/>
<dbReference type="MANE-Select" id="ENST00000373829.8">
    <property type="protein sequence ID" value="ENSP00000362935.3"/>
    <property type="RefSeq nucleotide sequence ID" value="NM_012278.4"/>
    <property type="RefSeq protein sequence ID" value="NP_036410.1"/>
</dbReference>
<dbReference type="UCSC" id="uc004dzr.2">
    <molecule id="Q9UKP3-1"/>
    <property type="organism name" value="human"/>
</dbReference>
<dbReference type="AGR" id="HGNC:6154"/>
<dbReference type="CTD" id="26548"/>
<dbReference type="DisGeNET" id="26548"/>
<dbReference type="GeneCards" id="ITGB1BP2"/>
<dbReference type="HGNC" id="HGNC:6154">
    <property type="gene designation" value="ITGB1BP2"/>
</dbReference>
<dbReference type="HPA" id="ENSG00000147166">
    <property type="expression patterns" value="Tissue enhanced (heart muscle, skeletal muscle, tongue)"/>
</dbReference>
<dbReference type="MIM" id="300332">
    <property type="type" value="gene"/>
</dbReference>
<dbReference type="neXtProt" id="NX_Q9UKP3"/>
<dbReference type="OpenTargets" id="ENSG00000147166"/>
<dbReference type="PharmGKB" id="PA29954"/>
<dbReference type="VEuPathDB" id="HostDB:ENSG00000147166"/>
<dbReference type="eggNOG" id="KOG1667">
    <property type="taxonomic scope" value="Eukaryota"/>
</dbReference>
<dbReference type="GeneTree" id="ENSGT00940000159429"/>
<dbReference type="HOGENOM" id="CLU_040079_0_0_1"/>
<dbReference type="InParanoid" id="Q9UKP3"/>
<dbReference type="OMA" id="KHRWVAK"/>
<dbReference type="OrthoDB" id="10261079at2759"/>
<dbReference type="PAN-GO" id="Q9UKP3">
    <property type="GO annotations" value="2 GO annotations based on evolutionary models"/>
</dbReference>
<dbReference type="PhylomeDB" id="Q9UKP3"/>
<dbReference type="TreeFam" id="TF105394"/>
<dbReference type="PathwayCommons" id="Q9UKP3"/>
<dbReference type="SignaLink" id="Q9UKP3"/>
<dbReference type="BioGRID-ORCS" id="26548">
    <property type="hits" value="13 hits in 777 CRISPR screens"/>
</dbReference>
<dbReference type="ChiTaRS" id="ITGB1BP2">
    <property type="organism name" value="human"/>
</dbReference>
<dbReference type="GenomeRNAi" id="26548"/>
<dbReference type="Pharos" id="Q9UKP3">
    <property type="development level" value="Tbio"/>
</dbReference>
<dbReference type="PRO" id="PR:Q9UKP3"/>
<dbReference type="Proteomes" id="UP000005640">
    <property type="component" value="Chromosome X"/>
</dbReference>
<dbReference type="RNAct" id="Q9UKP3">
    <property type="molecule type" value="protein"/>
</dbReference>
<dbReference type="Bgee" id="ENSG00000147166">
    <property type="expression patterns" value="Expressed in right atrium auricular region and 115 other cell types or tissues"/>
</dbReference>
<dbReference type="GO" id="GO:0030018">
    <property type="term" value="C:Z disc"/>
    <property type="evidence" value="ECO:0000318"/>
    <property type="project" value="GO_Central"/>
</dbReference>
<dbReference type="GO" id="GO:0005509">
    <property type="term" value="F:calcium ion binding"/>
    <property type="evidence" value="ECO:0007669"/>
    <property type="project" value="Ensembl"/>
</dbReference>
<dbReference type="GO" id="GO:0005178">
    <property type="term" value="F:integrin binding"/>
    <property type="evidence" value="ECO:0007669"/>
    <property type="project" value="Ensembl"/>
</dbReference>
<dbReference type="GO" id="GO:0017124">
    <property type="term" value="F:SH3 domain binding"/>
    <property type="evidence" value="ECO:0007669"/>
    <property type="project" value="UniProtKB-KW"/>
</dbReference>
<dbReference type="GO" id="GO:0008270">
    <property type="term" value="F:zinc ion binding"/>
    <property type="evidence" value="ECO:0000318"/>
    <property type="project" value="GO_Central"/>
</dbReference>
<dbReference type="GO" id="GO:0051298">
    <property type="term" value="P:centrosome duplication"/>
    <property type="evidence" value="ECO:0000318"/>
    <property type="project" value="GO_Central"/>
</dbReference>
<dbReference type="GO" id="GO:0007517">
    <property type="term" value="P:muscle organ development"/>
    <property type="evidence" value="ECO:0000304"/>
    <property type="project" value="ProtInc"/>
</dbReference>
<dbReference type="GO" id="GO:0007165">
    <property type="term" value="P:signal transduction"/>
    <property type="evidence" value="ECO:0000304"/>
    <property type="project" value="ProtInc"/>
</dbReference>
<dbReference type="CDD" id="cd06488">
    <property type="entry name" value="p23_melusin_like"/>
    <property type="match status" value="1"/>
</dbReference>
<dbReference type="FunFam" id="4.10.1130.20:FF:000001">
    <property type="entry name" value="Cysteine and histidine-rich domain-containing protein 1"/>
    <property type="match status" value="1"/>
</dbReference>
<dbReference type="FunFam" id="2.60.40.790:FF:000027">
    <property type="entry name" value="integrin beta-1-binding protein 2 isoform X1"/>
    <property type="match status" value="1"/>
</dbReference>
<dbReference type="FunFam" id="4.10.1130.20:FF:000004">
    <property type="entry name" value="integrin beta-1-binding protein 2 isoform X1"/>
    <property type="match status" value="1"/>
</dbReference>
<dbReference type="Gene3D" id="2.60.40.790">
    <property type="match status" value="1"/>
</dbReference>
<dbReference type="Gene3D" id="4.10.1130.20">
    <property type="match status" value="2"/>
</dbReference>
<dbReference type="InterPro" id="IPR007051">
    <property type="entry name" value="CHORD_dom"/>
</dbReference>
<dbReference type="InterPro" id="IPR039790">
    <property type="entry name" value="CHRD1"/>
</dbReference>
<dbReference type="InterPro" id="IPR007052">
    <property type="entry name" value="CS_dom"/>
</dbReference>
<dbReference type="InterPro" id="IPR008978">
    <property type="entry name" value="HSP20-like_chaperone"/>
</dbReference>
<dbReference type="PANTHER" id="PTHR46983">
    <property type="entry name" value="CYSTEINE AND HISTIDINE-RICH DOMAIN-CONTAINING PROTEIN 1"/>
    <property type="match status" value="1"/>
</dbReference>
<dbReference type="PANTHER" id="PTHR46983:SF2">
    <property type="entry name" value="INTEGRIN SUBUNIT BETA 1 BINDING PROTEIN 2"/>
    <property type="match status" value="1"/>
</dbReference>
<dbReference type="Pfam" id="PF04968">
    <property type="entry name" value="CHORD"/>
    <property type="match status" value="2"/>
</dbReference>
<dbReference type="Pfam" id="PF04969">
    <property type="entry name" value="CS"/>
    <property type="match status" value="1"/>
</dbReference>
<dbReference type="SUPFAM" id="SSF49764">
    <property type="entry name" value="HSP20-like chaperones"/>
    <property type="match status" value="1"/>
</dbReference>
<dbReference type="PROSITE" id="PS51401">
    <property type="entry name" value="CHORD"/>
    <property type="match status" value="2"/>
</dbReference>
<dbReference type="PROSITE" id="PS51203">
    <property type="entry name" value="CS"/>
    <property type="match status" value="1"/>
</dbReference>
<feature type="chain" id="PRO_0000084267" description="Integrin beta-1-binding protein 2">
    <location>
        <begin position="1"/>
        <end position="347"/>
    </location>
</feature>
<feature type="domain" description="CHORD 1" evidence="3">
    <location>
        <begin position="5"/>
        <end position="64"/>
    </location>
</feature>
<feature type="domain" description="CHORD 2" evidence="3">
    <location>
        <begin position="149"/>
        <end position="208"/>
    </location>
</feature>
<feature type="domain" description="CS" evidence="2">
    <location>
        <begin position="215"/>
        <end position="304"/>
    </location>
</feature>
<feature type="region of interest" description="Disordered" evidence="4">
    <location>
        <begin position="319"/>
        <end position="347"/>
    </location>
</feature>
<feature type="short sequence motif" description="SH3-binding" evidence="1">
    <location>
        <begin position="28"/>
        <end position="31"/>
    </location>
</feature>
<feature type="short sequence motif" description="SH3-binding" evidence="1">
    <location>
        <begin position="70"/>
        <end position="78"/>
    </location>
</feature>
<feature type="short sequence motif" description="SH2-binding" evidence="1">
    <location>
        <begin position="158"/>
        <end position="161"/>
    </location>
</feature>
<feature type="short sequence motif" description="SH3-binding" evidence="1">
    <location>
        <begin position="172"/>
        <end position="175"/>
    </location>
</feature>
<feature type="short sequence motif" description="SH2-binding" evidence="1">
    <location>
        <begin position="234"/>
        <end position="237"/>
    </location>
</feature>
<feature type="compositionally biased region" description="Acidic residues" evidence="4">
    <location>
        <begin position="320"/>
        <end position="347"/>
    </location>
</feature>
<feature type="binding site" evidence="3">
    <location>
        <position position="5"/>
    </location>
    <ligand>
        <name>Zn(2+)</name>
        <dbReference type="ChEBI" id="CHEBI:29105"/>
        <label>1</label>
    </ligand>
</feature>
<feature type="binding site" evidence="3">
    <location>
        <position position="10"/>
    </location>
    <ligand>
        <name>Zn(2+)</name>
        <dbReference type="ChEBI" id="CHEBI:29105"/>
        <label>1</label>
    </ligand>
</feature>
<feature type="binding site" evidence="3">
    <location>
        <position position="24"/>
    </location>
    <ligand>
        <name>Zn(2+)</name>
        <dbReference type="ChEBI" id="CHEBI:29105"/>
        <label>1</label>
    </ligand>
</feature>
<feature type="binding site" evidence="3">
    <location>
        <position position="27"/>
    </location>
    <ligand>
        <name>Zn(2+)</name>
        <dbReference type="ChEBI" id="CHEBI:29105"/>
        <label>2</label>
    </ligand>
</feature>
<feature type="binding site" evidence="3">
    <location>
        <position position="42"/>
    </location>
    <ligand>
        <name>Zn(2+)</name>
        <dbReference type="ChEBI" id="CHEBI:29105"/>
        <label>2</label>
    </ligand>
</feature>
<feature type="binding site" evidence="3">
    <location>
        <position position="43"/>
    </location>
    <ligand>
        <name>Zn(2+)</name>
        <dbReference type="ChEBI" id="CHEBI:29105"/>
        <label>2</label>
    </ligand>
</feature>
<feature type="binding site" evidence="3">
    <location>
        <position position="59"/>
    </location>
    <ligand>
        <name>Zn(2+)</name>
        <dbReference type="ChEBI" id="CHEBI:29105"/>
        <label>2</label>
    </ligand>
</feature>
<feature type="binding site" evidence="3">
    <location>
        <position position="64"/>
    </location>
    <ligand>
        <name>Zn(2+)</name>
        <dbReference type="ChEBI" id="CHEBI:29105"/>
        <label>1</label>
    </ligand>
</feature>
<feature type="binding site" evidence="3">
    <location>
        <position position="149"/>
    </location>
    <ligand>
        <name>Zn(2+)</name>
        <dbReference type="ChEBI" id="CHEBI:29105"/>
        <label>3</label>
    </ligand>
</feature>
<feature type="binding site" evidence="3">
    <location>
        <position position="154"/>
    </location>
    <ligand>
        <name>Zn(2+)</name>
        <dbReference type="ChEBI" id="CHEBI:29105"/>
        <label>3</label>
    </ligand>
</feature>
<feature type="binding site" evidence="3">
    <location>
        <position position="168"/>
    </location>
    <ligand>
        <name>Zn(2+)</name>
        <dbReference type="ChEBI" id="CHEBI:29105"/>
        <label>3</label>
    </ligand>
</feature>
<feature type="binding site" evidence="3">
    <location>
        <position position="171"/>
    </location>
    <ligand>
        <name>Zn(2+)</name>
        <dbReference type="ChEBI" id="CHEBI:29105"/>
        <label>4</label>
    </ligand>
</feature>
<feature type="binding site" evidence="3">
    <location>
        <position position="186"/>
    </location>
    <ligand>
        <name>Zn(2+)</name>
        <dbReference type="ChEBI" id="CHEBI:29105"/>
        <label>4</label>
    </ligand>
</feature>
<feature type="binding site" evidence="3">
    <location>
        <position position="187"/>
    </location>
    <ligand>
        <name>Zn(2+)</name>
        <dbReference type="ChEBI" id="CHEBI:29105"/>
        <label>4</label>
    </ligand>
</feature>
<feature type="binding site" evidence="3">
    <location>
        <position position="203"/>
    </location>
    <ligand>
        <name>Zn(2+)</name>
        <dbReference type="ChEBI" id="CHEBI:29105"/>
        <label>4</label>
    </ligand>
</feature>
<feature type="binding site" evidence="3">
    <location>
        <position position="208"/>
    </location>
    <ligand>
        <name>Zn(2+)</name>
        <dbReference type="ChEBI" id="CHEBI:29105"/>
        <label>3</label>
    </ligand>
</feature>
<feature type="splice variant" id="VSP_056379" description="In isoform 2." evidence="5">
    <original>LLCRNKGCGQHFDPNTNLP</original>
    <variation>T</variation>
    <location>
        <begin position="3"/>
        <end position="21"/>
    </location>
</feature>
<reference key="1">
    <citation type="journal article" date="1999" name="J. Biol. Chem.">
        <title>Melusin is a new muscle-specific interactor for beta(1) integrin cytoplasmic domain.</title>
        <authorList>
            <person name="Brancaccio M."/>
            <person name="Guazzone S."/>
            <person name="Menini N."/>
            <person name="Sibona E."/>
            <person name="Hirsch E."/>
            <person name="De Andrea M."/>
            <person name="Rocchi M."/>
            <person name="Altruda F."/>
            <person name="Tarone G."/>
            <person name="Silengo L."/>
        </authorList>
    </citation>
    <scope>NUCLEOTIDE SEQUENCE [MRNA] (ISOFORM 1)</scope>
    <source>
        <tissue>Skeletal muscle</tissue>
    </source>
</reference>
<reference key="2">
    <citation type="submission" date="1998-11" db="EMBL/GenBank/DDBJ databases">
        <title>Homo sapiens normal heart MST015.</title>
        <authorList>
            <person name="Liu Y.Q."/>
            <person name="Liu B."/>
            <person name="Zhao B."/>
            <person name="Wang X.Y."/>
            <person name="Song L."/>
            <person name="Ye J."/>
            <person name="Sheng H."/>
            <person name="Gao Y."/>
            <person name="Zhang C.L."/>
            <person name="Zhang J."/>
            <person name="Wei Y.J."/>
            <person name="Sun Y.H."/>
            <person name="Jiang Y.X."/>
            <person name="Zhao X.W."/>
            <person name="Liu S."/>
            <person name="Liu L.S."/>
            <person name="Ding J.F."/>
            <person name="Gao R.L."/>
            <person name="Wu Q.Y."/>
            <person name="Qiang B.Q."/>
            <person name="Yuan J.G."/>
            <person name="Liew C.C."/>
            <person name="Zhao M.S."/>
            <person name="Hui R.T."/>
        </authorList>
    </citation>
    <scope>NUCLEOTIDE SEQUENCE [LARGE SCALE MRNA] (ISOFORM 1)</scope>
    <source>
        <tissue>Heart</tissue>
    </source>
</reference>
<reference key="3">
    <citation type="journal article" date="2005" name="Nature">
        <title>The DNA sequence of the human X chromosome.</title>
        <authorList>
            <person name="Ross M.T."/>
            <person name="Grafham D.V."/>
            <person name="Coffey A.J."/>
            <person name="Scherer S."/>
            <person name="McLay K."/>
            <person name="Muzny D."/>
            <person name="Platzer M."/>
            <person name="Howell G.R."/>
            <person name="Burrows C."/>
            <person name="Bird C.P."/>
            <person name="Frankish A."/>
            <person name="Lovell F.L."/>
            <person name="Howe K.L."/>
            <person name="Ashurst J.L."/>
            <person name="Fulton R.S."/>
            <person name="Sudbrak R."/>
            <person name="Wen G."/>
            <person name="Jones M.C."/>
            <person name="Hurles M.E."/>
            <person name="Andrews T.D."/>
            <person name="Scott C.E."/>
            <person name="Searle S."/>
            <person name="Ramser J."/>
            <person name="Whittaker A."/>
            <person name="Deadman R."/>
            <person name="Carter N.P."/>
            <person name="Hunt S.E."/>
            <person name="Chen R."/>
            <person name="Cree A."/>
            <person name="Gunaratne P."/>
            <person name="Havlak P."/>
            <person name="Hodgson A."/>
            <person name="Metzker M.L."/>
            <person name="Richards S."/>
            <person name="Scott G."/>
            <person name="Steffen D."/>
            <person name="Sodergren E."/>
            <person name="Wheeler D.A."/>
            <person name="Worley K.C."/>
            <person name="Ainscough R."/>
            <person name="Ambrose K.D."/>
            <person name="Ansari-Lari M.A."/>
            <person name="Aradhya S."/>
            <person name="Ashwell R.I."/>
            <person name="Babbage A.K."/>
            <person name="Bagguley C.L."/>
            <person name="Ballabio A."/>
            <person name="Banerjee R."/>
            <person name="Barker G.E."/>
            <person name="Barlow K.F."/>
            <person name="Barrett I.P."/>
            <person name="Bates K.N."/>
            <person name="Beare D.M."/>
            <person name="Beasley H."/>
            <person name="Beasley O."/>
            <person name="Beck A."/>
            <person name="Bethel G."/>
            <person name="Blechschmidt K."/>
            <person name="Brady N."/>
            <person name="Bray-Allen S."/>
            <person name="Bridgeman A.M."/>
            <person name="Brown A.J."/>
            <person name="Brown M.J."/>
            <person name="Bonnin D."/>
            <person name="Bruford E.A."/>
            <person name="Buhay C."/>
            <person name="Burch P."/>
            <person name="Burford D."/>
            <person name="Burgess J."/>
            <person name="Burrill W."/>
            <person name="Burton J."/>
            <person name="Bye J.M."/>
            <person name="Carder C."/>
            <person name="Carrel L."/>
            <person name="Chako J."/>
            <person name="Chapman J.C."/>
            <person name="Chavez D."/>
            <person name="Chen E."/>
            <person name="Chen G."/>
            <person name="Chen Y."/>
            <person name="Chen Z."/>
            <person name="Chinault C."/>
            <person name="Ciccodicola A."/>
            <person name="Clark S.Y."/>
            <person name="Clarke G."/>
            <person name="Clee C.M."/>
            <person name="Clegg S."/>
            <person name="Clerc-Blankenburg K."/>
            <person name="Clifford K."/>
            <person name="Cobley V."/>
            <person name="Cole C.G."/>
            <person name="Conquer J.S."/>
            <person name="Corby N."/>
            <person name="Connor R.E."/>
            <person name="David R."/>
            <person name="Davies J."/>
            <person name="Davis C."/>
            <person name="Davis J."/>
            <person name="Delgado O."/>
            <person name="Deshazo D."/>
            <person name="Dhami P."/>
            <person name="Ding Y."/>
            <person name="Dinh H."/>
            <person name="Dodsworth S."/>
            <person name="Draper H."/>
            <person name="Dugan-Rocha S."/>
            <person name="Dunham A."/>
            <person name="Dunn M."/>
            <person name="Durbin K.J."/>
            <person name="Dutta I."/>
            <person name="Eades T."/>
            <person name="Ellwood M."/>
            <person name="Emery-Cohen A."/>
            <person name="Errington H."/>
            <person name="Evans K.L."/>
            <person name="Faulkner L."/>
            <person name="Francis F."/>
            <person name="Frankland J."/>
            <person name="Fraser A.E."/>
            <person name="Galgoczy P."/>
            <person name="Gilbert J."/>
            <person name="Gill R."/>
            <person name="Gloeckner G."/>
            <person name="Gregory S.G."/>
            <person name="Gribble S."/>
            <person name="Griffiths C."/>
            <person name="Grocock R."/>
            <person name="Gu Y."/>
            <person name="Gwilliam R."/>
            <person name="Hamilton C."/>
            <person name="Hart E.A."/>
            <person name="Hawes A."/>
            <person name="Heath P.D."/>
            <person name="Heitmann K."/>
            <person name="Hennig S."/>
            <person name="Hernandez J."/>
            <person name="Hinzmann B."/>
            <person name="Ho S."/>
            <person name="Hoffs M."/>
            <person name="Howden P.J."/>
            <person name="Huckle E.J."/>
            <person name="Hume J."/>
            <person name="Hunt P.J."/>
            <person name="Hunt A.R."/>
            <person name="Isherwood J."/>
            <person name="Jacob L."/>
            <person name="Johnson D."/>
            <person name="Jones S."/>
            <person name="de Jong P.J."/>
            <person name="Joseph S.S."/>
            <person name="Keenan S."/>
            <person name="Kelly S."/>
            <person name="Kershaw J.K."/>
            <person name="Khan Z."/>
            <person name="Kioschis P."/>
            <person name="Klages S."/>
            <person name="Knights A.J."/>
            <person name="Kosiura A."/>
            <person name="Kovar-Smith C."/>
            <person name="Laird G.K."/>
            <person name="Langford C."/>
            <person name="Lawlor S."/>
            <person name="Leversha M."/>
            <person name="Lewis L."/>
            <person name="Liu W."/>
            <person name="Lloyd C."/>
            <person name="Lloyd D.M."/>
            <person name="Loulseged H."/>
            <person name="Loveland J.E."/>
            <person name="Lovell J.D."/>
            <person name="Lozado R."/>
            <person name="Lu J."/>
            <person name="Lyne R."/>
            <person name="Ma J."/>
            <person name="Maheshwari M."/>
            <person name="Matthews L.H."/>
            <person name="McDowall J."/>
            <person name="McLaren S."/>
            <person name="McMurray A."/>
            <person name="Meidl P."/>
            <person name="Meitinger T."/>
            <person name="Milne S."/>
            <person name="Miner G."/>
            <person name="Mistry S.L."/>
            <person name="Morgan M."/>
            <person name="Morris S."/>
            <person name="Mueller I."/>
            <person name="Mullikin J.C."/>
            <person name="Nguyen N."/>
            <person name="Nordsiek G."/>
            <person name="Nyakatura G."/>
            <person name="O'dell C.N."/>
            <person name="Okwuonu G."/>
            <person name="Palmer S."/>
            <person name="Pandian R."/>
            <person name="Parker D."/>
            <person name="Parrish J."/>
            <person name="Pasternak S."/>
            <person name="Patel D."/>
            <person name="Pearce A.V."/>
            <person name="Pearson D.M."/>
            <person name="Pelan S.E."/>
            <person name="Perez L."/>
            <person name="Porter K.M."/>
            <person name="Ramsey Y."/>
            <person name="Reichwald K."/>
            <person name="Rhodes S."/>
            <person name="Ridler K.A."/>
            <person name="Schlessinger D."/>
            <person name="Schueler M.G."/>
            <person name="Sehra H.K."/>
            <person name="Shaw-Smith C."/>
            <person name="Shen H."/>
            <person name="Sheridan E.M."/>
            <person name="Shownkeen R."/>
            <person name="Skuce C.D."/>
            <person name="Smith M.L."/>
            <person name="Sotheran E.C."/>
            <person name="Steingruber H.E."/>
            <person name="Steward C.A."/>
            <person name="Storey R."/>
            <person name="Swann R.M."/>
            <person name="Swarbreck D."/>
            <person name="Tabor P.E."/>
            <person name="Taudien S."/>
            <person name="Taylor T."/>
            <person name="Teague B."/>
            <person name="Thomas K."/>
            <person name="Thorpe A."/>
            <person name="Timms K."/>
            <person name="Tracey A."/>
            <person name="Trevanion S."/>
            <person name="Tromans A.C."/>
            <person name="d'Urso M."/>
            <person name="Verduzco D."/>
            <person name="Villasana D."/>
            <person name="Waldron L."/>
            <person name="Wall M."/>
            <person name="Wang Q."/>
            <person name="Warren J."/>
            <person name="Warry G.L."/>
            <person name="Wei X."/>
            <person name="West A."/>
            <person name="Whitehead S.L."/>
            <person name="Whiteley M.N."/>
            <person name="Wilkinson J.E."/>
            <person name="Willey D.L."/>
            <person name="Williams G."/>
            <person name="Williams L."/>
            <person name="Williamson A."/>
            <person name="Williamson H."/>
            <person name="Wilming L."/>
            <person name="Woodmansey R.L."/>
            <person name="Wray P.W."/>
            <person name="Yen J."/>
            <person name="Zhang J."/>
            <person name="Zhou J."/>
            <person name="Zoghbi H."/>
            <person name="Zorilla S."/>
            <person name="Buck D."/>
            <person name="Reinhardt R."/>
            <person name="Poustka A."/>
            <person name="Rosenthal A."/>
            <person name="Lehrach H."/>
            <person name="Meindl A."/>
            <person name="Minx P.J."/>
            <person name="Hillier L.W."/>
            <person name="Willard H.F."/>
            <person name="Wilson R.K."/>
            <person name="Waterston R.H."/>
            <person name="Rice C.M."/>
            <person name="Vaudin M."/>
            <person name="Coulson A."/>
            <person name="Nelson D.L."/>
            <person name="Weinstock G."/>
            <person name="Sulston J.E."/>
            <person name="Durbin R.M."/>
            <person name="Hubbard T."/>
            <person name="Gibbs R.A."/>
            <person name="Beck S."/>
            <person name="Rogers J."/>
            <person name="Bentley D.R."/>
        </authorList>
    </citation>
    <scope>NUCLEOTIDE SEQUENCE [LARGE SCALE GENOMIC DNA]</scope>
</reference>
<reference key="4">
    <citation type="journal article" date="2004" name="Genome Res.">
        <title>The status, quality, and expansion of the NIH full-length cDNA project: the Mammalian Gene Collection (MGC).</title>
        <authorList>
            <consortium name="The MGC Project Team"/>
        </authorList>
    </citation>
    <scope>NUCLEOTIDE SEQUENCE [LARGE SCALE MRNA] (ISOFORM 2)</scope>
</reference>
<comment type="function">
    <text>May play a role during maturation and/or organization of muscles cells.</text>
</comment>
<comment type="subunit">
    <text>Interacts with beta-1 integrin subunit. This interaction is regulated by divalent cations, and it occurs only in absence of calcium.</text>
</comment>
<comment type="interaction">
    <interactant intactId="EBI-5659717">
        <id>Q9UKP3</id>
    </interactant>
    <interactant intactId="EBI-2372173">
        <id>Q9BRP1</id>
        <label>PDCD2L</label>
    </interactant>
    <organismsDiffer>false</organismsDiffer>
    <experiments>3</experiments>
</comment>
<comment type="interaction">
    <interactant intactId="EBI-5659717">
        <id>Q9UKP3</id>
    </interactant>
    <interactant intactId="EBI-413374">
        <id>P10276</id>
        <label>RARA</label>
    </interactant>
    <organismsDiffer>false</organismsDiffer>
    <experiments>2</experiments>
</comment>
<comment type="interaction">
    <interactant intactId="EBI-25856470">
        <id>Q9UKP3-2</id>
    </interactant>
    <interactant intactId="EBI-9641086">
        <id>P21333-2</id>
        <label>FLNA</label>
    </interactant>
    <organismsDiffer>false</organismsDiffer>
    <experiments>3</experiments>
</comment>
<comment type="interaction">
    <interactant intactId="EBI-25856470">
        <id>Q9UKP3-2</id>
    </interactant>
    <interactant intactId="EBI-352682">
        <id>P04792</id>
        <label>HSPB1</label>
    </interactant>
    <organismsDiffer>false</organismsDiffer>
    <experiments>3</experiments>
</comment>
<comment type="interaction">
    <interactant intactId="EBI-25856470">
        <id>Q9UKP3-2</id>
    </interactant>
    <interactant intactId="EBI-10975473">
        <id>O60333-2</id>
        <label>KIF1B</label>
    </interactant>
    <organismsDiffer>false</organismsDiffer>
    <experiments>3</experiments>
</comment>
<comment type="interaction">
    <interactant intactId="EBI-25856470">
        <id>Q9UKP3-2</id>
    </interactant>
    <interactant intactId="EBI-473160">
        <id>Q8N2W9</id>
        <label>PIAS4</label>
    </interactant>
    <organismsDiffer>false</organismsDiffer>
    <experiments>3</experiments>
</comment>
<comment type="interaction">
    <interactant intactId="EBI-25856470">
        <id>Q9UKP3-2</id>
    </interactant>
    <interactant intactId="EBI-21251460">
        <id>O60260-5</id>
        <label>PRKN</label>
    </interactant>
    <organismsDiffer>false</organismsDiffer>
    <experiments>3</experiments>
</comment>
<comment type="alternative products">
    <event type="alternative splicing"/>
    <isoform>
        <id>Q9UKP3-1</id>
        <name>1</name>
        <sequence type="displayed"/>
    </isoform>
    <isoform>
        <id>Q9UKP3-2</id>
        <name>2</name>
        <sequence type="described" ref="VSP_056379"/>
    </isoform>
</comment>
<comment type="tissue specificity">
    <text>Expressed in skeletal and cardiac muscles but not in other tissues.</text>
</comment>
<comment type="domain">
    <text>The tail domain binds to the cytoplasmic domain of both integrin beta-1a and beta-1d isoforms. The presence of Ca(2+) ions does not prevent binding of a fragment consisting of the second cysteine rich repeat and the tail domain but prevents the binding of the full-length protein.</text>
</comment>